<protein>
    <recommendedName>
        <fullName evidence="1">Peptide chain release factor 1</fullName>
        <shortName evidence="1">RF-1</shortName>
    </recommendedName>
</protein>
<feature type="chain" id="PRO_1000004921" description="Peptide chain release factor 1">
    <location>
        <begin position="1"/>
        <end position="359"/>
    </location>
</feature>
<feature type="modified residue" description="N5-methylglutamine" evidence="1">
    <location>
        <position position="235"/>
    </location>
</feature>
<dbReference type="EMBL" id="CP000450">
    <property type="protein sequence ID" value="ABI59091.1"/>
    <property type="molecule type" value="Genomic_DNA"/>
</dbReference>
<dbReference type="RefSeq" id="WP_011633916.1">
    <property type="nucleotide sequence ID" value="NC_008344.1"/>
</dbReference>
<dbReference type="SMR" id="Q0AHU1"/>
<dbReference type="STRING" id="335283.Neut_0827"/>
<dbReference type="KEGG" id="net:Neut_0827"/>
<dbReference type="eggNOG" id="COG0216">
    <property type="taxonomic scope" value="Bacteria"/>
</dbReference>
<dbReference type="HOGENOM" id="CLU_036856_0_1_4"/>
<dbReference type="OrthoDB" id="9806673at2"/>
<dbReference type="Proteomes" id="UP000001966">
    <property type="component" value="Chromosome"/>
</dbReference>
<dbReference type="GO" id="GO:0005737">
    <property type="term" value="C:cytoplasm"/>
    <property type="evidence" value="ECO:0007669"/>
    <property type="project" value="UniProtKB-SubCell"/>
</dbReference>
<dbReference type="GO" id="GO:0016149">
    <property type="term" value="F:translation release factor activity, codon specific"/>
    <property type="evidence" value="ECO:0007669"/>
    <property type="project" value="UniProtKB-UniRule"/>
</dbReference>
<dbReference type="FunFam" id="3.30.160.20:FF:000004">
    <property type="entry name" value="Peptide chain release factor 1"/>
    <property type="match status" value="1"/>
</dbReference>
<dbReference type="FunFam" id="3.30.70.1660:FF:000002">
    <property type="entry name" value="Peptide chain release factor 1"/>
    <property type="match status" value="1"/>
</dbReference>
<dbReference type="FunFam" id="3.30.70.1660:FF:000004">
    <property type="entry name" value="Peptide chain release factor 1"/>
    <property type="match status" value="1"/>
</dbReference>
<dbReference type="Gene3D" id="3.30.160.20">
    <property type="match status" value="1"/>
</dbReference>
<dbReference type="Gene3D" id="3.30.70.1660">
    <property type="match status" value="2"/>
</dbReference>
<dbReference type="Gene3D" id="6.10.140.1950">
    <property type="match status" value="1"/>
</dbReference>
<dbReference type="HAMAP" id="MF_00093">
    <property type="entry name" value="Rel_fac_1"/>
    <property type="match status" value="1"/>
</dbReference>
<dbReference type="InterPro" id="IPR005139">
    <property type="entry name" value="PCRF"/>
</dbReference>
<dbReference type="InterPro" id="IPR000352">
    <property type="entry name" value="Pep_chain_release_fac_I"/>
</dbReference>
<dbReference type="InterPro" id="IPR045853">
    <property type="entry name" value="Pep_chain_release_fac_I_sf"/>
</dbReference>
<dbReference type="InterPro" id="IPR050057">
    <property type="entry name" value="Prokaryotic/Mito_RF"/>
</dbReference>
<dbReference type="InterPro" id="IPR004373">
    <property type="entry name" value="RF-1"/>
</dbReference>
<dbReference type="NCBIfam" id="TIGR00019">
    <property type="entry name" value="prfA"/>
    <property type="match status" value="1"/>
</dbReference>
<dbReference type="NCBIfam" id="NF001859">
    <property type="entry name" value="PRK00591.1"/>
    <property type="match status" value="1"/>
</dbReference>
<dbReference type="PANTHER" id="PTHR43804">
    <property type="entry name" value="LD18447P"/>
    <property type="match status" value="1"/>
</dbReference>
<dbReference type="PANTHER" id="PTHR43804:SF7">
    <property type="entry name" value="LD18447P"/>
    <property type="match status" value="1"/>
</dbReference>
<dbReference type="Pfam" id="PF03462">
    <property type="entry name" value="PCRF"/>
    <property type="match status" value="1"/>
</dbReference>
<dbReference type="Pfam" id="PF00472">
    <property type="entry name" value="RF-1"/>
    <property type="match status" value="1"/>
</dbReference>
<dbReference type="SMART" id="SM00937">
    <property type="entry name" value="PCRF"/>
    <property type="match status" value="1"/>
</dbReference>
<dbReference type="SUPFAM" id="SSF75620">
    <property type="entry name" value="Release factor"/>
    <property type="match status" value="1"/>
</dbReference>
<dbReference type="PROSITE" id="PS00745">
    <property type="entry name" value="RF_PROK_I"/>
    <property type="match status" value="1"/>
</dbReference>
<proteinExistence type="inferred from homology"/>
<name>RF1_NITEC</name>
<comment type="function">
    <text evidence="1">Peptide chain release factor 1 directs the termination of translation in response to the peptide chain termination codons UAG and UAA.</text>
</comment>
<comment type="subcellular location">
    <subcellularLocation>
        <location evidence="1">Cytoplasm</location>
    </subcellularLocation>
</comment>
<comment type="PTM">
    <text evidence="1">Methylated by PrmC. Methylation increases the termination efficiency of RF1.</text>
</comment>
<comment type="similarity">
    <text evidence="1">Belongs to the prokaryotic/mitochondrial release factor family.</text>
</comment>
<gene>
    <name evidence="1" type="primary">prfA</name>
    <name type="ordered locus">Neut_0827</name>
</gene>
<sequence>MNKGIVDQLTRLSIRLEELDKLLSNEKITADLDNYRKLSRERSEIEPVTRFYHTYQQVEQDLATAMEMSVDPQFRDFAEAEIDADKQKLADIETEILKQLLPRDPNDERNIFLEIRAGTGGDESALFAGDLFRMYSRYAEREGWQVEIVSQNPSEVGGYKEIIARIIGHGAYSRLKFESGAHRVQRVPATETQGRVHTSTCTVAVLPEADEISGVTLNPADLRIDTFRASGAGGQHINKTDSAVRITHLPTGIVAECQEGRSQHKNKAQAMSVLISRILDKQVRAQQAEQAAARKSLVGSGERSERIRTYNFPQGRITDHRINLTLYKIEQIMDGELDELCSTLAAEHQAAQLAAMIER</sequence>
<reference key="1">
    <citation type="journal article" date="2007" name="Environ. Microbiol.">
        <title>Whole-genome analysis of the ammonia-oxidizing bacterium, Nitrosomonas eutropha C91: implications for niche adaptation.</title>
        <authorList>
            <person name="Stein L.Y."/>
            <person name="Arp D.J."/>
            <person name="Berube P.M."/>
            <person name="Chain P.S."/>
            <person name="Hauser L."/>
            <person name="Jetten M.S."/>
            <person name="Klotz M.G."/>
            <person name="Larimer F.W."/>
            <person name="Norton J.M."/>
            <person name="Op den Camp H.J.M."/>
            <person name="Shin M."/>
            <person name="Wei X."/>
        </authorList>
    </citation>
    <scope>NUCLEOTIDE SEQUENCE [LARGE SCALE GENOMIC DNA]</scope>
    <source>
        <strain>DSM 101675 / C91 / Nm57</strain>
    </source>
</reference>
<organism>
    <name type="scientific">Nitrosomonas eutropha (strain DSM 101675 / C91 / Nm57)</name>
    <dbReference type="NCBI Taxonomy" id="335283"/>
    <lineage>
        <taxon>Bacteria</taxon>
        <taxon>Pseudomonadati</taxon>
        <taxon>Pseudomonadota</taxon>
        <taxon>Betaproteobacteria</taxon>
        <taxon>Nitrosomonadales</taxon>
        <taxon>Nitrosomonadaceae</taxon>
        <taxon>Nitrosomonas</taxon>
    </lineage>
</organism>
<accession>Q0AHU1</accession>
<evidence type="ECO:0000255" key="1">
    <source>
        <dbReference type="HAMAP-Rule" id="MF_00093"/>
    </source>
</evidence>
<keyword id="KW-0963">Cytoplasm</keyword>
<keyword id="KW-0488">Methylation</keyword>
<keyword id="KW-0648">Protein biosynthesis</keyword>